<evidence type="ECO:0000255" key="1">
    <source>
        <dbReference type="HAMAP-Rule" id="MF_00204"/>
    </source>
</evidence>
<evidence type="ECO:0000256" key="2">
    <source>
        <dbReference type="SAM" id="MobiDB-lite"/>
    </source>
</evidence>
<keyword id="KW-0067">ATP-binding</keyword>
<keyword id="KW-0963">Cytoplasm</keyword>
<keyword id="KW-0227">DNA damage</keyword>
<keyword id="KW-0228">DNA excision</keyword>
<keyword id="KW-0234">DNA repair</keyword>
<keyword id="KW-0267">Excision nuclease</keyword>
<keyword id="KW-0347">Helicase</keyword>
<keyword id="KW-0378">Hydrolase</keyword>
<keyword id="KW-0547">Nucleotide-binding</keyword>
<keyword id="KW-1185">Reference proteome</keyword>
<keyword id="KW-0742">SOS response</keyword>
<proteinExistence type="inferred from homology"/>
<organism>
    <name type="scientific">Anaplasma marginale (strain Florida)</name>
    <dbReference type="NCBI Taxonomy" id="320483"/>
    <lineage>
        <taxon>Bacteria</taxon>
        <taxon>Pseudomonadati</taxon>
        <taxon>Pseudomonadota</taxon>
        <taxon>Alphaproteobacteria</taxon>
        <taxon>Rickettsiales</taxon>
        <taxon>Anaplasmataceae</taxon>
        <taxon>Anaplasma</taxon>
    </lineage>
</organism>
<comment type="function">
    <text evidence="1">The UvrABC repair system catalyzes the recognition and processing of DNA lesions. A damage recognition complex composed of 2 UvrA and 2 UvrB subunits scans DNA for abnormalities. Upon binding of the UvrA(2)B(2) complex to a putative damaged site, the DNA wraps around one UvrB monomer. DNA wrap is dependent on ATP binding by UvrB and probably causes local melting of the DNA helix, facilitating insertion of UvrB beta-hairpin between the DNA strands. Then UvrB probes one DNA strand for the presence of a lesion. If a lesion is found the UvrA subunits dissociate and the UvrB-DNA preincision complex is formed. This complex is subsequently bound by UvrC and the second UvrB is released. If no lesion is found, the DNA wraps around the other UvrB subunit that will check the other stand for damage.</text>
</comment>
<comment type="subunit">
    <text evidence="1">Forms a heterotetramer with UvrA during the search for lesions. Interacts with UvrC in an incision complex.</text>
</comment>
<comment type="subcellular location">
    <subcellularLocation>
        <location evidence="1">Cytoplasm</location>
    </subcellularLocation>
</comment>
<comment type="domain">
    <text evidence="1">The beta-hairpin motif is involved in DNA binding.</text>
</comment>
<comment type="similarity">
    <text evidence="1">Belongs to the UvrB family.</text>
</comment>
<dbReference type="EMBL" id="CP001079">
    <property type="protein sequence ID" value="ACM49763.1"/>
    <property type="molecule type" value="Genomic_DNA"/>
</dbReference>
<dbReference type="RefSeq" id="WP_010270990.1">
    <property type="nucleotide sequence ID" value="NZ_AFMS01000195.1"/>
</dbReference>
<dbReference type="SMR" id="B9KH59"/>
<dbReference type="STRING" id="320483.AMF_941"/>
<dbReference type="GeneID" id="7398531"/>
<dbReference type="KEGG" id="amf:AMF_941"/>
<dbReference type="eggNOG" id="COG0556">
    <property type="taxonomic scope" value="Bacteria"/>
</dbReference>
<dbReference type="HOGENOM" id="CLU_009621_2_1_5"/>
<dbReference type="Proteomes" id="UP000007307">
    <property type="component" value="Chromosome"/>
</dbReference>
<dbReference type="GO" id="GO:0005737">
    <property type="term" value="C:cytoplasm"/>
    <property type="evidence" value="ECO:0007669"/>
    <property type="project" value="UniProtKB-SubCell"/>
</dbReference>
<dbReference type="GO" id="GO:0009380">
    <property type="term" value="C:excinuclease repair complex"/>
    <property type="evidence" value="ECO:0007669"/>
    <property type="project" value="InterPro"/>
</dbReference>
<dbReference type="GO" id="GO:0005524">
    <property type="term" value="F:ATP binding"/>
    <property type="evidence" value="ECO:0007669"/>
    <property type="project" value="UniProtKB-UniRule"/>
</dbReference>
<dbReference type="GO" id="GO:0016887">
    <property type="term" value="F:ATP hydrolysis activity"/>
    <property type="evidence" value="ECO:0007669"/>
    <property type="project" value="InterPro"/>
</dbReference>
<dbReference type="GO" id="GO:0003677">
    <property type="term" value="F:DNA binding"/>
    <property type="evidence" value="ECO:0007669"/>
    <property type="project" value="UniProtKB-UniRule"/>
</dbReference>
<dbReference type="GO" id="GO:0009381">
    <property type="term" value="F:excinuclease ABC activity"/>
    <property type="evidence" value="ECO:0007669"/>
    <property type="project" value="UniProtKB-UniRule"/>
</dbReference>
<dbReference type="GO" id="GO:0004386">
    <property type="term" value="F:helicase activity"/>
    <property type="evidence" value="ECO:0007669"/>
    <property type="project" value="UniProtKB-KW"/>
</dbReference>
<dbReference type="GO" id="GO:0006289">
    <property type="term" value="P:nucleotide-excision repair"/>
    <property type="evidence" value="ECO:0007669"/>
    <property type="project" value="UniProtKB-UniRule"/>
</dbReference>
<dbReference type="GO" id="GO:0009432">
    <property type="term" value="P:SOS response"/>
    <property type="evidence" value="ECO:0007669"/>
    <property type="project" value="UniProtKB-UniRule"/>
</dbReference>
<dbReference type="CDD" id="cd17916">
    <property type="entry name" value="DEXHc_UvrB"/>
    <property type="match status" value="1"/>
</dbReference>
<dbReference type="CDD" id="cd18790">
    <property type="entry name" value="SF2_C_UvrB"/>
    <property type="match status" value="1"/>
</dbReference>
<dbReference type="Gene3D" id="3.40.50.300">
    <property type="entry name" value="P-loop containing nucleotide triphosphate hydrolases"/>
    <property type="match status" value="3"/>
</dbReference>
<dbReference type="Gene3D" id="4.10.860.10">
    <property type="entry name" value="UVR domain"/>
    <property type="match status" value="1"/>
</dbReference>
<dbReference type="HAMAP" id="MF_00204">
    <property type="entry name" value="UvrB"/>
    <property type="match status" value="1"/>
</dbReference>
<dbReference type="InterPro" id="IPR006935">
    <property type="entry name" value="Helicase/UvrB_N"/>
</dbReference>
<dbReference type="InterPro" id="IPR014001">
    <property type="entry name" value="Helicase_ATP-bd"/>
</dbReference>
<dbReference type="InterPro" id="IPR001650">
    <property type="entry name" value="Helicase_C-like"/>
</dbReference>
<dbReference type="InterPro" id="IPR027417">
    <property type="entry name" value="P-loop_NTPase"/>
</dbReference>
<dbReference type="InterPro" id="IPR001943">
    <property type="entry name" value="UVR_dom"/>
</dbReference>
<dbReference type="InterPro" id="IPR036876">
    <property type="entry name" value="UVR_dom_sf"/>
</dbReference>
<dbReference type="InterPro" id="IPR004807">
    <property type="entry name" value="UvrB"/>
</dbReference>
<dbReference type="InterPro" id="IPR041471">
    <property type="entry name" value="UvrB_inter"/>
</dbReference>
<dbReference type="InterPro" id="IPR024759">
    <property type="entry name" value="UvrB_YAD/RRR_dom"/>
</dbReference>
<dbReference type="NCBIfam" id="NF003673">
    <property type="entry name" value="PRK05298.1"/>
    <property type="match status" value="1"/>
</dbReference>
<dbReference type="NCBIfam" id="TIGR00631">
    <property type="entry name" value="uvrb"/>
    <property type="match status" value="1"/>
</dbReference>
<dbReference type="PANTHER" id="PTHR24029">
    <property type="entry name" value="UVRABC SYSTEM PROTEIN B"/>
    <property type="match status" value="1"/>
</dbReference>
<dbReference type="PANTHER" id="PTHR24029:SF0">
    <property type="entry name" value="UVRABC SYSTEM PROTEIN B"/>
    <property type="match status" value="1"/>
</dbReference>
<dbReference type="Pfam" id="PF00271">
    <property type="entry name" value="Helicase_C"/>
    <property type="match status" value="1"/>
</dbReference>
<dbReference type="Pfam" id="PF04851">
    <property type="entry name" value="ResIII"/>
    <property type="match status" value="1"/>
</dbReference>
<dbReference type="Pfam" id="PF02151">
    <property type="entry name" value="UVR"/>
    <property type="match status" value="1"/>
</dbReference>
<dbReference type="Pfam" id="PF12344">
    <property type="entry name" value="UvrB"/>
    <property type="match status" value="1"/>
</dbReference>
<dbReference type="Pfam" id="PF17757">
    <property type="entry name" value="UvrB_inter"/>
    <property type="match status" value="1"/>
</dbReference>
<dbReference type="SMART" id="SM00487">
    <property type="entry name" value="DEXDc"/>
    <property type="match status" value="1"/>
</dbReference>
<dbReference type="SMART" id="SM00490">
    <property type="entry name" value="HELICc"/>
    <property type="match status" value="1"/>
</dbReference>
<dbReference type="SUPFAM" id="SSF46600">
    <property type="entry name" value="C-terminal UvrC-binding domain of UvrB"/>
    <property type="match status" value="1"/>
</dbReference>
<dbReference type="SUPFAM" id="SSF52540">
    <property type="entry name" value="P-loop containing nucleoside triphosphate hydrolases"/>
    <property type="match status" value="2"/>
</dbReference>
<dbReference type="PROSITE" id="PS51192">
    <property type="entry name" value="HELICASE_ATP_BIND_1"/>
    <property type="match status" value="1"/>
</dbReference>
<dbReference type="PROSITE" id="PS51194">
    <property type="entry name" value="HELICASE_CTER"/>
    <property type="match status" value="1"/>
</dbReference>
<dbReference type="PROSITE" id="PS50151">
    <property type="entry name" value="UVR"/>
    <property type="match status" value="1"/>
</dbReference>
<feature type="chain" id="PRO_1000200530" description="UvrABC system protein B">
    <location>
        <begin position="1"/>
        <end position="651"/>
    </location>
</feature>
<feature type="domain" description="Helicase ATP-binding" evidence="1">
    <location>
        <begin position="25"/>
        <end position="178"/>
    </location>
</feature>
<feature type="domain" description="Helicase C-terminal" evidence="1">
    <location>
        <begin position="427"/>
        <end position="591"/>
    </location>
</feature>
<feature type="domain" description="UVR" evidence="1">
    <location>
        <begin position="616"/>
        <end position="651"/>
    </location>
</feature>
<feature type="region of interest" description="Disordered" evidence="2">
    <location>
        <begin position="593"/>
        <end position="615"/>
    </location>
</feature>
<feature type="short sequence motif" description="Beta-hairpin">
    <location>
        <begin position="91"/>
        <end position="114"/>
    </location>
</feature>
<feature type="binding site" evidence="1">
    <location>
        <begin position="38"/>
        <end position="45"/>
    </location>
    <ligand>
        <name>ATP</name>
        <dbReference type="ChEBI" id="CHEBI:30616"/>
    </ligand>
</feature>
<reference key="1">
    <citation type="journal article" date="2009" name="BMC Genomics">
        <title>Conservation in the face of diversity: multistrain analysis of an intracellular bacterium.</title>
        <authorList>
            <person name="Dark M.J."/>
            <person name="Herndon D.R."/>
            <person name="Kappmeyer L.S."/>
            <person name="Gonzales M.P."/>
            <person name="Nordeen E."/>
            <person name="Palmer G.H."/>
            <person name="Knowles D.P. Jr."/>
            <person name="Brayton K.A."/>
        </authorList>
    </citation>
    <scope>NUCLEOTIDE SEQUENCE [LARGE SCALE GENOMIC DNA]</scope>
    <source>
        <strain>Florida</strain>
    </source>
</reference>
<protein>
    <recommendedName>
        <fullName evidence="1">UvrABC system protein B</fullName>
        <shortName evidence="1">Protein UvrB</shortName>
    </recommendedName>
    <alternativeName>
        <fullName evidence="1">Excinuclease ABC subunit B</fullName>
    </alternativeName>
</protein>
<name>UVRB_ANAMF</name>
<accession>B9KH59</accession>
<gene>
    <name evidence="1" type="primary">uvrB</name>
    <name type="ordered locus">AMF_941</name>
</gene>
<sequence length="651" mass="73796">MQRFKISSEFNPSGDQPGAIDSLVRGISCGAKEQTLLGVTGSGKTFTMASVIEQTQRPAIIIAHNKTLAAQLHEEMRSFFPENAVEYFVSYYDYYQPEAYIPQSDVYIEKDALINDKIDLLRHSATRSLLERRDVVVVASVSCIYGLGSPELYSEMTVPIALGMKLDMCQLQERLVELQYKHGNRYERGSFSVQGDVLSVFPSHYEDRIWKISFFGDEVDSIQEVDPKSGMVTLKLEKIKIFPNSHYVTPRPTLLQAISEIEKELDECALQFKQCNKIVEADRIVERTRFDIEMMRETGTCKGIENYSRYLCGKEAGDPPNTLLDYLPQDAIMFIDESHMTVPQIRAMYNGDRMRKANLINHGFRMPSALDNRPLTFAEWEDRKPTVVYVSATPGQYELQQTGGVATEQLIRPTGLLDPVCIVKGADGQIHDVMCESQATIARGYRVLITTLTKKMAENLTEYMREMGIKVAYLHSDVKTLERIEIISDLRLGVIDVLVGVNLMREGLDIPECALVGILDADKEGFLRSTTSLIQTIGRAARNVEGRVILYANVITKSMRTAMEETDRRRDIQRKYNQEHSIVPRTIQKPVQTSLSERVGSSRKKVSRDTNTDPANRDIVELQKEMLLCAENLDFERAVEIRNEIKRLTAP</sequence>